<gene>
    <name evidence="1" type="primary">rpoA</name>
    <name type="ordered locus">CLH_0266</name>
</gene>
<organism>
    <name type="scientific">Clostridium botulinum (strain Alaska E43 / Type E3)</name>
    <dbReference type="NCBI Taxonomy" id="508767"/>
    <lineage>
        <taxon>Bacteria</taxon>
        <taxon>Bacillati</taxon>
        <taxon>Bacillota</taxon>
        <taxon>Clostridia</taxon>
        <taxon>Eubacteriales</taxon>
        <taxon>Clostridiaceae</taxon>
        <taxon>Clostridium</taxon>
    </lineage>
</organism>
<protein>
    <recommendedName>
        <fullName evidence="1">DNA-directed RNA polymerase subunit alpha</fullName>
        <shortName evidence="1">RNAP subunit alpha</shortName>
        <ecNumber evidence="1">2.7.7.6</ecNumber>
    </recommendedName>
    <alternativeName>
        <fullName evidence="1">RNA polymerase subunit alpha</fullName>
    </alternativeName>
    <alternativeName>
        <fullName evidence="1">Transcriptase subunit alpha</fullName>
    </alternativeName>
</protein>
<dbReference type="EC" id="2.7.7.6" evidence="1"/>
<dbReference type="EMBL" id="CP001078">
    <property type="protein sequence ID" value="ACD53291.1"/>
    <property type="molecule type" value="Genomic_DNA"/>
</dbReference>
<dbReference type="RefSeq" id="WP_003371007.1">
    <property type="nucleotide sequence ID" value="NC_010723.1"/>
</dbReference>
<dbReference type="SMR" id="B2UYD9"/>
<dbReference type="KEGG" id="cbt:CLH_0266"/>
<dbReference type="HOGENOM" id="CLU_053084_0_1_9"/>
<dbReference type="GO" id="GO:0005737">
    <property type="term" value="C:cytoplasm"/>
    <property type="evidence" value="ECO:0007669"/>
    <property type="project" value="UniProtKB-ARBA"/>
</dbReference>
<dbReference type="GO" id="GO:0000428">
    <property type="term" value="C:DNA-directed RNA polymerase complex"/>
    <property type="evidence" value="ECO:0007669"/>
    <property type="project" value="UniProtKB-KW"/>
</dbReference>
<dbReference type="GO" id="GO:0003677">
    <property type="term" value="F:DNA binding"/>
    <property type="evidence" value="ECO:0007669"/>
    <property type="project" value="UniProtKB-UniRule"/>
</dbReference>
<dbReference type="GO" id="GO:0003899">
    <property type="term" value="F:DNA-directed RNA polymerase activity"/>
    <property type="evidence" value="ECO:0007669"/>
    <property type="project" value="UniProtKB-UniRule"/>
</dbReference>
<dbReference type="GO" id="GO:0046983">
    <property type="term" value="F:protein dimerization activity"/>
    <property type="evidence" value="ECO:0007669"/>
    <property type="project" value="InterPro"/>
</dbReference>
<dbReference type="GO" id="GO:0006351">
    <property type="term" value="P:DNA-templated transcription"/>
    <property type="evidence" value="ECO:0007669"/>
    <property type="project" value="UniProtKB-UniRule"/>
</dbReference>
<dbReference type="CDD" id="cd06928">
    <property type="entry name" value="RNAP_alpha_NTD"/>
    <property type="match status" value="1"/>
</dbReference>
<dbReference type="FunFam" id="1.10.150.20:FF:000001">
    <property type="entry name" value="DNA-directed RNA polymerase subunit alpha"/>
    <property type="match status" value="1"/>
</dbReference>
<dbReference type="FunFam" id="2.170.120.12:FF:000001">
    <property type="entry name" value="DNA-directed RNA polymerase subunit alpha"/>
    <property type="match status" value="1"/>
</dbReference>
<dbReference type="Gene3D" id="1.10.150.20">
    <property type="entry name" value="5' to 3' exonuclease, C-terminal subdomain"/>
    <property type="match status" value="1"/>
</dbReference>
<dbReference type="Gene3D" id="2.170.120.12">
    <property type="entry name" value="DNA-directed RNA polymerase, insert domain"/>
    <property type="match status" value="1"/>
</dbReference>
<dbReference type="Gene3D" id="3.30.1360.10">
    <property type="entry name" value="RNA polymerase, RBP11-like subunit"/>
    <property type="match status" value="1"/>
</dbReference>
<dbReference type="HAMAP" id="MF_00059">
    <property type="entry name" value="RNApol_bact_RpoA"/>
    <property type="match status" value="1"/>
</dbReference>
<dbReference type="InterPro" id="IPR011262">
    <property type="entry name" value="DNA-dir_RNA_pol_insert"/>
</dbReference>
<dbReference type="InterPro" id="IPR011263">
    <property type="entry name" value="DNA-dir_RNA_pol_RpoA/D/Rpb3"/>
</dbReference>
<dbReference type="InterPro" id="IPR011773">
    <property type="entry name" value="DNA-dir_RpoA"/>
</dbReference>
<dbReference type="InterPro" id="IPR036603">
    <property type="entry name" value="RBP11-like"/>
</dbReference>
<dbReference type="InterPro" id="IPR011260">
    <property type="entry name" value="RNAP_asu_C"/>
</dbReference>
<dbReference type="InterPro" id="IPR036643">
    <property type="entry name" value="RNApol_insert_sf"/>
</dbReference>
<dbReference type="NCBIfam" id="NF003513">
    <property type="entry name" value="PRK05182.1-2"/>
    <property type="match status" value="1"/>
</dbReference>
<dbReference type="NCBIfam" id="NF003515">
    <property type="entry name" value="PRK05182.2-1"/>
    <property type="match status" value="1"/>
</dbReference>
<dbReference type="NCBIfam" id="NF003519">
    <property type="entry name" value="PRK05182.2-5"/>
    <property type="match status" value="1"/>
</dbReference>
<dbReference type="NCBIfam" id="TIGR02027">
    <property type="entry name" value="rpoA"/>
    <property type="match status" value="1"/>
</dbReference>
<dbReference type="Pfam" id="PF01000">
    <property type="entry name" value="RNA_pol_A_bac"/>
    <property type="match status" value="1"/>
</dbReference>
<dbReference type="Pfam" id="PF03118">
    <property type="entry name" value="RNA_pol_A_CTD"/>
    <property type="match status" value="1"/>
</dbReference>
<dbReference type="Pfam" id="PF01193">
    <property type="entry name" value="RNA_pol_L"/>
    <property type="match status" value="1"/>
</dbReference>
<dbReference type="SMART" id="SM00662">
    <property type="entry name" value="RPOLD"/>
    <property type="match status" value="1"/>
</dbReference>
<dbReference type="SUPFAM" id="SSF47789">
    <property type="entry name" value="C-terminal domain of RNA polymerase alpha subunit"/>
    <property type="match status" value="1"/>
</dbReference>
<dbReference type="SUPFAM" id="SSF56553">
    <property type="entry name" value="Insert subdomain of RNA polymerase alpha subunit"/>
    <property type="match status" value="1"/>
</dbReference>
<dbReference type="SUPFAM" id="SSF55257">
    <property type="entry name" value="RBP11-like subunits of RNA polymerase"/>
    <property type="match status" value="1"/>
</dbReference>
<feature type="chain" id="PRO_1000091938" description="DNA-directed RNA polymerase subunit alpha">
    <location>
        <begin position="1"/>
        <end position="315"/>
    </location>
</feature>
<feature type="region of interest" description="Alpha N-terminal domain (alpha-NTD)" evidence="1">
    <location>
        <begin position="1"/>
        <end position="228"/>
    </location>
</feature>
<feature type="region of interest" description="Alpha C-terminal domain (alpha-CTD)" evidence="1">
    <location>
        <begin position="245"/>
        <end position="315"/>
    </location>
</feature>
<proteinExistence type="inferred from homology"/>
<keyword id="KW-0240">DNA-directed RNA polymerase</keyword>
<keyword id="KW-0548">Nucleotidyltransferase</keyword>
<keyword id="KW-0804">Transcription</keyword>
<keyword id="KW-0808">Transferase</keyword>
<name>RPOA_CLOBA</name>
<reference key="1">
    <citation type="submission" date="2008-05" db="EMBL/GenBank/DDBJ databases">
        <title>Complete genome sequence of Clostridium botulinum E3 str. Alaska E43.</title>
        <authorList>
            <person name="Brinkac L.M."/>
            <person name="Brown J.L."/>
            <person name="Bruce D."/>
            <person name="Detter C."/>
            <person name="Munk C."/>
            <person name="Smith L.A."/>
            <person name="Smith T.J."/>
            <person name="Sutton G."/>
            <person name="Brettin T.S."/>
        </authorList>
    </citation>
    <scope>NUCLEOTIDE SEQUENCE [LARGE SCALE GENOMIC DNA]</scope>
    <source>
        <strain>Alaska E43 / Type E3</strain>
    </source>
</reference>
<sequence>MLEIEKPIIECIEASEDGTYGKYVVEPLERGYGITLGNALRRILLSSLPGVATSSVKIDGVLHEFSTVQGVKEDVTELILNIKSLALRMNGEGPKVIYIDAKGPGEVTGADIKTDGDVEVVNKDLHIATLDDNGRLYMELTVNRGRGYVTQNKNKSDELPISSIAIDSIYTPVKKVNFTVDNTRVGQITDYDKLTLEIWTNGTIKIDEAISLSAKILIEHFKLFMSLTNNTNDVEIMIEKEEDKKEKVLEMTVEELDLSVRSYNCLKRAGINTVQELATKSMDDMMKVRNLGKKSLEEVERKLKELGLCLKLNDE</sequence>
<evidence type="ECO:0000255" key="1">
    <source>
        <dbReference type="HAMAP-Rule" id="MF_00059"/>
    </source>
</evidence>
<comment type="function">
    <text evidence="1">DNA-dependent RNA polymerase catalyzes the transcription of DNA into RNA using the four ribonucleoside triphosphates as substrates.</text>
</comment>
<comment type="catalytic activity">
    <reaction evidence="1">
        <text>RNA(n) + a ribonucleoside 5'-triphosphate = RNA(n+1) + diphosphate</text>
        <dbReference type="Rhea" id="RHEA:21248"/>
        <dbReference type="Rhea" id="RHEA-COMP:14527"/>
        <dbReference type="Rhea" id="RHEA-COMP:17342"/>
        <dbReference type="ChEBI" id="CHEBI:33019"/>
        <dbReference type="ChEBI" id="CHEBI:61557"/>
        <dbReference type="ChEBI" id="CHEBI:140395"/>
        <dbReference type="EC" id="2.7.7.6"/>
    </reaction>
</comment>
<comment type="subunit">
    <text evidence="1">Homodimer. The RNAP catalytic core consists of 2 alpha, 1 beta, 1 beta' and 1 omega subunit. When a sigma factor is associated with the core the holoenzyme is formed, which can initiate transcription.</text>
</comment>
<comment type="domain">
    <text evidence="1">The N-terminal domain is essential for RNAP assembly and basal transcription, whereas the C-terminal domain is involved in interaction with transcriptional regulators and with upstream promoter elements.</text>
</comment>
<comment type="similarity">
    <text evidence="1">Belongs to the RNA polymerase alpha chain family.</text>
</comment>
<accession>B2UYD9</accession>